<evidence type="ECO:0000255" key="1">
    <source>
        <dbReference type="HAMAP-Rule" id="MF_00081"/>
    </source>
</evidence>
<gene>
    <name evidence="1" type="primary">hrcA</name>
    <name type="ordered locus">MGAS10270_Spy1568</name>
</gene>
<comment type="function">
    <text evidence="1">Negative regulator of class I heat shock genes (grpE-dnaK-dnaJ and groELS operons). Prevents heat-shock induction of these operons.</text>
</comment>
<comment type="similarity">
    <text evidence="1">Belongs to the HrcA family.</text>
</comment>
<sequence>MITQRQNDILNLIVELFTQTHEPVGSKALQRTIDSSSATIRNDMAKLEKLGLLEKAHTSSGRMPSPAGFKYFVEHSLRLDSIDEQDIYHVIKAFDFEAFKLEDMLQKASHILSEMTGYTSVILDVEPARQRLTGFDVVQLSNHDALAVMTLDESKPVTVQFAIPRNFLTRDLIAFKAIVEERLLDSSVIDIHYKLRTEIPQIVQKYFVTTDNVLQLFDYVFSELFLETVFVAGKVNSLTYSDLSTYQFLDNEQQVAISLRQSLKEGEMASVQVADSQEAALADVSVLTHKFLIPYRGFGLLSLIGPIDMDYRRSVSLVNIIGKVLAAKLGDYYRYLNSNHYEVH</sequence>
<protein>
    <recommendedName>
        <fullName evidence="1">Heat-inducible transcription repressor HrcA</fullName>
    </recommendedName>
</protein>
<feature type="chain" id="PRO_1000010459" description="Heat-inducible transcription repressor HrcA">
    <location>
        <begin position="1"/>
        <end position="344"/>
    </location>
</feature>
<reference key="1">
    <citation type="journal article" date="2006" name="Proc. Natl. Acad. Sci. U.S.A.">
        <title>Molecular genetic anatomy of inter- and intraserotype variation in the human bacterial pathogen group A Streptococcus.</title>
        <authorList>
            <person name="Beres S.B."/>
            <person name="Richter E.W."/>
            <person name="Nagiec M.J."/>
            <person name="Sumby P."/>
            <person name="Porcella S.F."/>
            <person name="DeLeo F.R."/>
            <person name="Musser J.M."/>
        </authorList>
    </citation>
    <scope>NUCLEOTIDE SEQUENCE [LARGE SCALE GENOMIC DNA]</scope>
    <source>
        <strain>MGAS10270</strain>
    </source>
</reference>
<name>HRCA_STRPD</name>
<dbReference type="EMBL" id="CP000260">
    <property type="protein sequence ID" value="ABF34633.1"/>
    <property type="molecule type" value="Genomic_DNA"/>
</dbReference>
<dbReference type="SMR" id="Q1JFC6"/>
<dbReference type="KEGG" id="sph:MGAS10270_Spy1568"/>
<dbReference type="HOGENOM" id="CLU_050019_1_0_9"/>
<dbReference type="Proteomes" id="UP000002436">
    <property type="component" value="Chromosome"/>
</dbReference>
<dbReference type="GO" id="GO:0003677">
    <property type="term" value="F:DNA binding"/>
    <property type="evidence" value="ECO:0007669"/>
    <property type="project" value="InterPro"/>
</dbReference>
<dbReference type="GO" id="GO:0045892">
    <property type="term" value="P:negative regulation of DNA-templated transcription"/>
    <property type="evidence" value="ECO:0007669"/>
    <property type="project" value="UniProtKB-UniRule"/>
</dbReference>
<dbReference type="Gene3D" id="3.30.450.40">
    <property type="match status" value="1"/>
</dbReference>
<dbReference type="Gene3D" id="3.30.390.60">
    <property type="entry name" value="Heat-inducible transcription repressor hrca homolog, domain 3"/>
    <property type="match status" value="1"/>
</dbReference>
<dbReference type="Gene3D" id="1.10.10.10">
    <property type="entry name" value="Winged helix-like DNA-binding domain superfamily/Winged helix DNA-binding domain"/>
    <property type="match status" value="1"/>
</dbReference>
<dbReference type="HAMAP" id="MF_00081">
    <property type="entry name" value="HrcA"/>
    <property type="match status" value="1"/>
</dbReference>
<dbReference type="InterPro" id="IPR029016">
    <property type="entry name" value="GAF-like_dom_sf"/>
</dbReference>
<dbReference type="InterPro" id="IPR002571">
    <property type="entry name" value="HrcA"/>
</dbReference>
<dbReference type="InterPro" id="IPR021153">
    <property type="entry name" value="HrcA_C"/>
</dbReference>
<dbReference type="InterPro" id="IPR036388">
    <property type="entry name" value="WH-like_DNA-bd_sf"/>
</dbReference>
<dbReference type="InterPro" id="IPR036390">
    <property type="entry name" value="WH_DNA-bd_sf"/>
</dbReference>
<dbReference type="InterPro" id="IPR005104">
    <property type="entry name" value="WHTH_HrcA_DNA-bd"/>
</dbReference>
<dbReference type="InterPro" id="IPR023120">
    <property type="entry name" value="WHTH_transcript_rep_HrcA_IDD"/>
</dbReference>
<dbReference type="NCBIfam" id="TIGR00331">
    <property type="entry name" value="hrcA"/>
    <property type="match status" value="1"/>
</dbReference>
<dbReference type="PANTHER" id="PTHR34824">
    <property type="entry name" value="HEAT-INDUCIBLE TRANSCRIPTION REPRESSOR HRCA"/>
    <property type="match status" value="1"/>
</dbReference>
<dbReference type="PANTHER" id="PTHR34824:SF1">
    <property type="entry name" value="HEAT-INDUCIBLE TRANSCRIPTION REPRESSOR HRCA"/>
    <property type="match status" value="1"/>
</dbReference>
<dbReference type="Pfam" id="PF01628">
    <property type="entry name" value="HrcA"/>
    <property type="match status" value="1"/>
</dbReference>
<dbReference type="Pfam" id="PF03444">
    <property type="entry name" value="HrcA_DNA-bdg"/>
    <property type="match status" value="1"/>
</dbReference>
<dbReference type="PIRSF" id="PIRSF005485">
    <property type="entry name" value="HrcA"/>
    <property type="match status" value="1"/>
</dbReference>
<dbReference type="SUPFAM" id="SSF55781">
    <property type="entry name" value="GAF domain-like"/>
    <property type="match status" value="1"/>
</dbReference>
<dbReference type="SUPFAM" id="SSF46785">
    <property type="entry name" value="Winged helix' DNA-binding domain"/>
    <property type="match status" value="1"/>
</dbReference>
<organism>
    <name type="scientific">Streptococcus pyogenes serotype M2 (strain MGAS10270)</name>
    <dbReference type="NCBI Taxonomy" id="370552"/>
    <lineage>
        <taxon>Bacteria</taxon>
        <taxon>Bacillati</taxon>
        <taxon>Bacillota</taxon>
        <taxon>Bacilli</taxon>
        <taxon>Lactobacillales</taxon>
        <taxon>Streptococcaceae</taxon>
        <taxon>Streptococcus</taxon>
    </lineage>
</organism>
<proteinExistence type="inferred from homology"/>
<keyword id="KW-0678">Repressor</keyword>
<keyword id="KW-0346">Stress response</keyword>
<keyword id="KW-0804">Transcription</keyword>
<keyword id="KW-0805">Transcription regulation</keyword>
<accession>Q1JFC6</accession>